<name>RS29_HUMAN</name>
<protein>
    <recommendedName>
        <fullName evidence="9">Small ribosomal subunit protein uS14</fullName>
    </recommendedName>
    <alternativeName>
        <fullName>40S ribosomal protein S29</fullName>
    </alternativeName>
</protein>
<accession>P62273</accession>
<accession>A8MZ73</accession>
<accession>P30054</accession>
<reference key="1">
    <citation type="journal article" date="1995" name="Biochim. Biophys. Acta">
        <title>Cloning, sequencing and expression of the L5, L21, L27a, L28, S5, S9, S10 and S29 human ribosomal protein mRNAs.</title>
        <authorList>
            <person name="Frigerio J.-M."/>
            <person name="Dagorn J.-C."/>
            <person name="Iovanna J.L."/>
        </authorList>
    </citation>
    <scope>NUCLEOTIDE SEQUENCE [MRNA] (ISOFORM 1)</scope>
    <source>
        <tissue>Colon</tissue>
    </source>
</reference>
<reference key="2">
    <citation type="journal article" date="1996" name="Biochim. Biophys. Acta">
        <title>The S29 ribosomal protein increases tumor suppressor activity of K rev-1 gene on v-K ras-transformed NIH3T3 cells.</title>
        <authorList>
            <person name="Kondoh N."/>
            <person name="Noda M."/>
            <person name="Fisher R.J."/>
            <person name="Schweinfest C.W."/>
            <person name="Papas T.S."/>
            <person name="Kondoh A."/>
            <person name="Samuel K.P."/>
            <person name="Oikawa T."/>
        </authorList>
    </citation>
    <scope>NUCLEOTIDE SEQUENCE [MRNA] (ISOFORM 1)</scope>
    <source>
        <tissue>Colon</tissue>
    </source>
</reference>
<reference key="3">
    <citation type="journal article" date="2002" name="Genome Res.">
        <title>The human ribosomal protein genes: sequencing and comparative analysis of 73 genes.</title>
        <authorList>
            <person name="Yoshihama M."/>
            <person name="Uechi T."/>
            <person name="Asakawa S."/>
            <person name="Kawasaki K."/>
            <person name="Kato S."/>
            <person name="Higa S."/>
            <person name="Maeda N."/>
            <person name="Minoshima S."/>
            <person name="Tanaka T."/>
            <person name="Shimizu N."/>
            <person name="Kenmochi N."/>
        </authorList>
    </citation>
    <scope>NUCLEOTIDE SEQUENCE [GENOMIC DNA] (ISOFORM 1)</scope>
</reference>
<reference key="4">
    <citation type="journal article" date="2003" name="Nature">
        <title>The DNA sequence and analysis of human chromosome 14.</title>
        <authorList>
            <person name="Heilig R."/>
            <person name="Eckenberg R."/>
            <person name="Petit J.-L."/>
            <person name="Fonknechten N."/>
            <person name="Da Silva C."/>
            <person name="Cattolico L."/>
            <person name="Levy M."/>
            <person name="Barbe V."/>
            <person name="De Berardinis V."/>
            <person name="Ureta-Vidal A."/>
            <person name="Pelletier E."/>
            <person name="Vico V."/>
            <person name="Anthouard V."/>
            <person name="Rowen L."/>
            <person name="Madan A."/>
            <person name="Qin S."/>
            <person name="Sun H."/>
            <person name="Du H."/>
            <person name="Pepin K."/>
            <person name="Artiguenave F."/>
            <person name="Robert C."/>
            <person name="Cruaud C."/>
            <person name="Bruels T."/>
            <person name="Jaillon O."/>
            <person name="Friedlander L."/>
            <person name="Samson G."/>
            <person name="Brottier P."/>
            <person name="Cure S."/>
            <person name="Segurens B."/>
            <person name="Aniere F."/>
            <person name="Samain S."/>
            <person name="Crespeau H."/>
            <person name="Abbasi N."/>
            <person name="Aiach N."/>
            <person name="Boscus D."/>
            <person name="Dickhoff R."/>
            <person name="Dors M."/>
            <person name="Dubois I."/>
            <person name="Friedman C."/>
            <person name="Gouyvenoux M."/>
            <person name="James R."/>
            <person name="Madan A."/>
            <person name="Mairey-Estrada B."/>
            <person name="Mangenot S."/>
            <person name="Martins N."/>
            <person name="Menard M."/>
            <person name="Oztas S."/>
            <person name="Ratcliffe A."/>
            <person name="Shaffer T."/>
            <person name="Trask B."/>
            <person name="Vacherie B."/>
            <person name="Bellemere C."/>
            <person name="Belser C."/>
            <person name="Besnard-Gonnet M."/>
            <person name="Bartol-Mavel D."/>
            <person name="Boutard M."/>
            <person name="Briez-Silla S."/>
            <person name="Combette S."/>
            <person name="Dufosse-Laurent V."/>
            <person name="Ferron C."/>
            <person name="Lechaplais C."/>
            <person name="Louesse C."/>
            <person name="Muselet D."/>
            <person name="Magdelenat G."/>
            <person name="Pateau E."/>
            <person name="Petit E."/>
            <person name="Sirvain-Trukniewicz P."/>
            <person name="Trybou A."/>
            <person name="Vega-Czarny N."/>
            <person name="Bataille E."/>
            <person name="Bluet E."/>
            <person name="Bordelais I."/>
            <person name="Dubois M."/>
            <person name="Dumont C."/>
            <person name="Guerin T."/>
            <person name="Haffray S."/>
            <person name="Hammadi R."/>
            <person name="Muanga J."/>
            <person name="Pellouin V."/>
            <person name="Robert D."/>
            <person name="Wunderle E."/>
            <person name="Gauguet G."/>
            <person name="Roy A."/>
            <person name="Sainte-Marthe L."/>
            <person name="Verdier J."/>
            <person name="Verdier-Discala C."/>
            <person name="Hillier L.W."/>
            <person name="Fulton L."/>
            <person name="McPherson J."/>
            <person name="Matsuda F."/>
            <person name="Wilson R."/>
            <person name="Scarpelli C."/>
            <person name="Gyapay G."/>
            <person name="Wincker P."/>
            <person name="Saurin W."/>
            <person name="Quetier F."/>
            <person name="Waterston R."/>
            <person name="Hood L."/>
            <person name="Weissenbach J."/>
        </authorList>
    </citation>
    <scope>NUCLEOTIDE SEQUENCE [LARGE SCALE GENOMIC DNA]</scope>
</reference>
<reference key="5">
    <citation type="journal article" date="2004" name="Genome Res.">
        <title>The status, quality, and expansion of the NIH full-length cDNA project: the Mammalian Gene Collection (MGC).</title>
        <authorList>
            <consortium name="The MGC Project Team"/>
        </authorList>
    </citation>
    <scope>NUCLEOTIDE SEQUENCE [LARGE SCALE MRNA] (ISOFORMS 1 AND 2)</scope>
    <source>
        <tissue>Blood</tissue>
        <tissue>Bone marrow</tissue>
        <tissue>Eye</tissue>
    </source>
</reference>
<reference key="6">
    <citation type="journal article" date="1996" name="Eur. J. Biochem.">
        <title>Characterization of the human small-ribosomal-subunit proteins by N-terminal and internal sequencing, and mass spectrometry.</title>
        <authorList>
            <person name="Vladimirov S.N."/>
            <person name="Ivanov A.V."/>
            <person name="Karpova G.G."/>
            <person name="Musolyamov A.K."/>
            <person name="Egorov T.A."/>
            <person name="Thiede B."/>
            <person name="Wittmann-Liebold B."/>
            <person name="Otto A."/>
        </authorList>
    </citation>
    <scope>PROTEIN SEQUENCE OF 2-11</scope>
    <source>
        <tissue>Placenta</tissue>
    </source>
</reference>
<reference key="7">
    <citation type="submission" date="2008-02" db="UniProtKB">
        <authorList>
            <person name="Bienvenut W.V."/>
            <person name="Murray L."/>
            <person name="Brunton V.G."/>
            <person name="Frame M.C."/>
        </authorList>
    </citation>
    <scope>PROTEIN SEQUENCE OF 2-12 AND 49-56</scope>
    <scope>CLEAVAGE OF INITIATOR METHIONINE</scope>
    <scope>IDENTIFICATION BY MASS SPECTROMETRY</scope>
    <source>
        <tissue>Colon adenocarcinoma</tissue>
    </source>
</reference>
<reference key="8">
    <citation type="journal article" date="1998" name="Genome Res.">
        <title>A map of 75 human ribosomal protein genes.</title>
        <authorList>
            <person name="Kenmochi N."/>
            <person name="Kawaguchi T."/>
            <person name="Rozen S."/>
            <person name="Davis E."/>
            <person name="Goodman N."/>
            <person name="Hudson T.J."/>
            <person name="Tanaka T."/>
            <person name="Page D.C."/>
        </authorList>
    </citation>
    <scope>NUCLEOTIDE SEQUENCE [GENOMIC DNA] OF 29-54</scope>
</reference>
<reference key="9">
    <citation type="journal article" date="2009" name="Science">
        <title>Lysine acetylation targets protein complexes and co-regulates major cellular functions.</title>
        <authorList>
            <person name="Choudhary C."/>
            <person name="Kumar C."/>
            <person name="Gnad F."/>
            <person name="Nielsen M.L."/>
            <person name="Rehman M."/>
            <person name="Walther T.C."/>
            <person name="Olsen J.V."/>
            <person name="Mann M."/>
        </authorList>
    </citation>
    <scope>ACETYLATION [LARGE SCALE ANALYSIS] AT LYS-48</scope>
    <scope>IDENTIFICATION BY MASS SPECTROMETRY [LARGE SCALE ANALYSIS]</scope>
</reference>
<reference key="10">
    <citation type="journal article" date="2011" name="BMC Syst. Biol.">
        <title>Initial characterization of the human central proteome.</title>
        <authorList>
            <person name="Burkard T.R."/>
            <person name="Planyavsky M."/>
            <person name="Kaupe I."/>
            <person name="Breitwieser F.P."/>
            <person name="Buerckstuemmer T."/>
            <person name="Bennett K.L."/>
            <person name="Superti-Furga G."/>
            <person name="Colinge J."/>
        </authorList>
    </citation>
    <scope>IDENTIFICATION BY MASS SPECTROMETRY [LARGE SCALE ANALYSIS]</scope>
</reference>
<reference key="11">
    <citation type="journal article" date="2013" name="J. Proteome Res.">
        <title>Toward a comprehensive characterization of a human cancer cell phosphoproteome.</title>
        <authorList>
            <person name="Zhou H."/>
            <person name="Di Palma S."/>
            <person name="Preisinger C."/>
            <person name="Peng M."/>
            <person name="Polat A.N."/>
            <person name="Heck A.J."/>
            <person name="Mohammed S."/>
        </authorList>
    </citation>
    <scope>PHOSPHORYLATION [LARGE SCALE ANALYSIS] AT SER-9</scope>
    <scope>IDENTIFICATION BY MASS SPECTROMETRY [LARGE SCALE ANALYSIS]</scope>
    <source>
        <tissue>Cervix carcinoma</tissue>
    </source>
</reference>
<reference key="12">
    <citation type="journal article" date="2014" name="Curr. Opin. Struct. Biol.">
        <title>A new system for naming ribosomal proteins.</title>
        <authorList>
            <person name="Ban N."/>
            <person name="Beckmann R."/>
            <person name="Cate J.H.D."/>
            <person name="Dinman J.D."/>
            <person name="Dragon F."/>
            <person name="Ellis S.R."/>
            <person name="Lafontaine D.L.J."/>
            <person name="Lindahl L."/>
            <person name="Liljas A."/>
            <person name="Lipton J.M."/>
            <person name="McAlear M.A."/>
            <person name="Moore P.B."/>
            <person name="Noller H.F."/>
            <person name="Ortega J."/>
            <person name="Panse V.G."/>
            <person name="Ramakrishnan V."/>
            <person name="Spahn C.M.T."/>
            <person name="Steitz T.A."/>
            <person name="Tchorzewski M."/>
            <person name="Tollervey D."/>
            <person name="Warren A.J."/>
            <person name="Williamson J.R."/>
            <person name="Wilson D."/>
            <person name="Yonath A."/>
            <person name="Yusupov M."/>
        </authorList>
    </citation>
    <scope>NOMENCLATURE</scope>
</reference>
<reference key="13">
    <citation type="journal article" date="2014" name="Mol. Cell. Proteomics">
        <title>Immunoaffinity enrichment and mass spectrometry analysis of protein methylation.</title>
        <authorList>
            <person name="Guo A."/>
            <person name="Gu H."/>
            <person name="Zhou J."/>
            <person name="Mulhern D."/>
            <person name="Wang Y."/>
            <person name="Lee K.A."/>
            <person name="Yang V."/>
            <person name="Aguiar M."/>
            <person name="Kornhauser J."/>
            <person name="Jia X."/>
            <person name="Ren J."/>
            <person name="Beausoleil S.A."/>
            <person name="Silva J.C."/>
            <person name="Vemulapalli V."/>
            <person name="Bedford M.T."/>
            <person name="Comb M.J."/>
        </authorList>
    </citation>
    <scope>METHYLATION [LARGE SCALE ANALYSIS] AT ARG-12</scope>
    <scope>IDENTIFICATION BY MASS SPECTROMETRY [LARGE SCALE ANALYSIS]</scope>
    <source>
        <tissue>Colon carcinoma</tissue>
    </source>
</reference>
<reference key="14">
    <citation type="journal article" date="2015" name="Proteomics">
        <title>N-terminome analysis of the human mitochondrial proteome.</title>
        <authorList>
            <person name="Vaca Jacome A.S."/>
            <person name="Rabilloud T."/>
            <person name="Schaeffer-Reiss C."/>
            <person name="Rompais M."/>
            <person name="Ayoub D."/>
            <person name="Lane L."/>
            <person name="Bairoch A."/>
            <person name="Van Dorsselaer A."/>
            <person name="Carapito C."/>
        </authorList>
    </citation>
    <scope>IDENTIFICATION BY MASS SPECTROMETRY [LARGE SCALE ANALYSIS]</scope>
</reference>
<reference key="15">
    <citation type="journal article" date="2013" name="Nature">
        <title>Structures of the human and Drosophila 80S ribosome.</title>
        <authorList>
            <person name="Anger A.M."/>
            <person name="Armache J.P."/>
            <person name="Berninghausen O."/>
            <person name="Habeck M."/>
            <person name="Subklewe M."/>
            <person name="Wilson D.N."/>
            <person name="Beckmann R."/>
        </authorList>
    </citation>
    <scope>STRUCTURE BY ELECTRON MICROSCOPY (5.0 ANGSTROMS) OF RIBOSOME</scope>
    <scope>FUNCTION</scope>
    <scope>SUBUNIT</scope>
    <scope>SUBCELLULAR LOCATION</scope>
</reference>
<reference evidence="15" key="16">
    <citation type="journal article" date="2015" name="Cell">
        <title>Structural snapshots of actively translating human ribosomes.</title>
        <authorList>
            <person name="Behrmann E."/>
            <person name="Loerke J."/>
            <person name="Budkevich T.V."/>
            <person name="Yamamoto K."/>
            <person name="Schmidt A."/>
            <person name="Penczek P.A."/>
            <person name="Vos M.R."/>
            <person name="Burger J."/>
            <person name="Mielke T."/>
            <person name="Scheerer P."/>
            <person name="Spahn C.M."/>
        </authorList>
    </citation>
    <scope>STRUCTURE BY ELECTRON MICROSCOPY (3.50 ANGSTROMS) IN COMPLEX WITH ZINC</scope>
    <scope>SUBCELLULAR LOCATION</scope>
    <scope>SUBUNIT</scope>
    <scope>COFACTOR</scope>
</reference>
<reference evidence="13" key="17">
    <citation type="journal article" date="2015" name="Nature">
        <title>Structure of the human 80S ribosome.</title>
        <authorList>
            <person name="Khatter H."/>
            <person name="Myasnikov A.G."/>
            <person name="Natchiar S.K."/>
            <person name="Klaholz B.P."/>
        </authorList>
    </citation>
    <scope>STRUCTURE BY ELECTRON MICROSCOPY (3.60 ANGSTROMS)</scope>
</reference>
<reference key="18">
    <citation type="journal article" date="2014" name="Blood">
        <title>Whole-exome sequencing and functional studies identify RPS29 as a novel gene mutated in multicase Diamond-Blackfan anemia families.</title>
        <authorList>
            <person name="Mirabello L."/>
            <person name="Macari E.R."/>
            <person name="Jessop L."/>
            <person name="Ellis S.R."/>
            <person name="Myers T."/>
            <person name="Giri N."/>
            <person name="Taylor A.M."/>
            <person name="McGrath K.E."/>
            <person name="Humphries J.M."/>
            <person name="Ballew B.J."/>
            <person name="Yeager M."/>
            <person name="Boland J.F."/>
            <person name="He J."/>
            <person name="Hicks B.D."/>
            <person name="Burdett L."/>
            <person name="Alter B.P."/>
            <person name="Zon L."/>
            <person name="Savage S.A."/>
        </authorList>
    </citation>
    <scope>INVOLVEMENT IN DBA13</scope>
    <scope>VARIANTS DBA13 PHE-31 AND THR-50</scope>
    <scope>CHARACTERIZATION OF VARIANTS DBA13 PHE-31 AND THR-50</scope>
</reference>
<gene>
    <name type="primary">RPS29</name>
</gene>
<organism>
    <name type="scientific">Homo sapiens</name>
    <name type="common">Human</name>
    <dbReference type="NCBI Taxonomy" id="9606"/>
    <lineage>
        <taxon>Eukaryota</taxon>
        <taxon>Metazoa</taxon>
        <taxon>Chordata</taxon>
        <taxon>Craniata</taxon>
        <taxon>Vertebrata</taxon>
        <taxon>Euteleostomi</taxon>
        <taxon>Mammalia</taxon>
        <taxon>Eutheria</taxon>
        <taxon>Euarchontoglires</taxon>
        <taxon>Primates</taxon>
        <taxon>Haplorrhini</taxon>
        <taxon>Catarrhini</taxon>
        <taxon>Hominidae</taxon>
        <taxon>Homo</taxon>
    </lineage>
</organism>
<feature type="initiator methionine" description="Removed" evidence="6 7">
    <location>
        <position position="1"/>
    </location>
</feature>
<feature type="chain" id="PRO_0000131019" description="Small ribosomal subunit protein uS14">
    <location>
        <begin position="2"/>
        <end position="56"/>
    </location>
</feature>
<feature type="binding site" evidence="5 14 15">
    <location>
        <position position="21"/>
    </location>
    <ligand>
        <name>Zn(2+)</name>
        <dbReference type="ChEBI" id="CHEBI:29105"/>
    </ligand>
</feature>
<feature type="binding site" evidence="5 14 15 16 17">
    <location>
        <position position="24"/>
    </location>
    <ligand>
        <name>Zn(2+)</name>
        <dbReference type="ChEBI" id="CHEBI:29105"/>
    </ligand>
</feature>
<feature type="binding site" evidence="5 14 15 16 17">
    <location>
        <position position="39"/>
    </location>
    <ligand>
        <name>Zn(2+)</name>
        <dbReference type="ChEBI" id="CHEBI:29105"/>
    </ligand>
</feature>
<feature type="binding site" evidence="5 14 15 17">
    <location>
        <position position="42"/>
    </location>
    <ligand>
        <name>Zn(2+)</name>
        <dbReference type="ChEBI" id="CHEBI:29105"/>
    </ligand>
</feature>
<feature type="modified residue" description="Phosphoserine" evidence="19">
    <location>
        <position position="9"/>
    </location>
</feature>
<feature type="modified residue" description="Omega-N-methylarginine" evidence="20">
    <location>
        <position position="12"/>
    </location>
</feature>
<feature type="modified residue" description="N6-acetyllysine" evidence="18">
    <location>
        <position position="48"/>
    </location>
</feature>
<feature type="splice variant" id="VSP_042844" description="In isoform 2." evidence="8">
    <original>KLD</original>
    <variation>KKDLSCLPWHCLWR</variation>
    <location>
        <begin position="54"/>
        <end position="56"/>
    </location>
</feature>
<feature type="sequence variant" id="VAR_071328" description="In DBA13; results in reduced protein expression; results in pre-rRNA processing defect; dbSNP:rs587777568." evidence="3">
    <original>I</original>
    <variation>F</variation>
    <location>
        <position position="31"/>
    </location>
</feature>
<feature type="sequence variant" id="VAR_071329" description="In DBA13; results in reduced protein expression; results in pre-rRNA processing defect; dbSNP:rs587777569." evidence="3">
    <original>I</original>
    <variation>T</variation>
    <location>
        <position position="50"/>
    </location>
</feature>
<feature type="turn" evidence="22">
    <location>
        <begin position="4"/>
        <end position="8"/>
    </location>
</feature>
<feature type="strand" evidence="22">
    <location>
        <begin position="13"/>
        <end position="15"/>
    </location>
</feature>
<feature type="helix" evidence="22">
    <location>
        <begin position="16"/>
        <end position="18"/>
    </location>
</feature>
<feature type="turn" evidence="22">
    <location>
        <begin position="22"/>
        <end position="24"/>
    </location>
</feature>
<feature type="strand" evidence="22">
    <location>
        <begin position="28"/>
        <end position="31"/>
    </location>
</feature>
<feature type="helix" evidence="22">
    <location>
        <begin position="33"/>
        <end position="35"/>
    </location>
</feature>
<feature type="helix" evidence="22">
    <location>
        <begin position="40"/>
        <end position="50"/>
    </location>
</feature>
<feature type="strand" evidence="21">
    <location>
        <begin position="53"/>
        <end position="56"/>
    </location>
</feature>
<dbReference type="EMBL" id="U14973">
    <property type="protein sequence ID" value="AAA85661.1"/>
    <property type="molecule type" value="mRNA"/>
</dbReference>
<dbReference type="EMBL" id="L31610">
    <property type="protein sequence ID" value="AAB27426.1"/>
    <property type="molecule type" value="mRNA"/>
</dbReference>
<dbReference type="EMBL" id="AB061847">
    <property type="protein sequence ID" value="BAB79485.1"/>
    <property type="molecule type" value="Genomic_DNA"/>
</dbReference>
<dbReference type="EMBL" id="AL139099">
    <property type="status" value="NOT_ANNOTATED_CDS"/>
    <property type="molecule type" value="Genomic_DNA"/>
</dbReference>
<dbReference type="EMBL" id="BC015974">
    <property type="protein sequence ID" value="AAH15974.2"/>
    <property type="molecule type" value="mRNA"/>
</dbReference>
<dbReference type="EMBL" id="BC032813">
    <property type="protein sequence ID" value="AAH32813.1"/>
    <property type="molecule type" value="mRNA"/>
</dbReference>
<dbReference type="EMBL" id="BC035313">
    <property type="protein sequence ID" value="AAH35313.1"/>
    <property type="molecule type" value="mRNA"/>
</dbReference>
<dbReference type="EMBL" id="AB007165">
    <property type="protein sequence ID" value="BAA25827.1"/>
    <property type="molecule type" value="Genomic_DNA"/>
</dbReference>
<dbReference type="CCDS" id="CCDS32072.1">
    <molecule id="P62273-2"/>
</dbReference>
<dbReference type="CCDS" id="CCDS9685.1">
    <molecule id="P62273-1"/>
</dbReference>
<dbReference type="PIR" id="S55919">
    <property type="entry name" value="S55919"/>
</dbReference>
<dbReference type="RefSeq" id="NP_001023.1">
    <molecule id="P62273-1"/>
    <property type="nucleotide sequence ID" value="NM_001032.5"/>
</dbReference>
<dbReference type="RefSeq" id="NP_001025172.1">
    <molecule id="P62273-2"/>
    <property type="nucleotide sequence ID" value="NM_001030001.4"/>
</dbReference>
<dbReference type="PDB" id="4UG0">
    <property type="method" value="EM"/>
    <property type="chains" value="Sd=1-56"/>
</dbReference>
<dbReference type="PDB" id="4V6X">
    <property type="method" value="EM"/>
    <property type="resolution" value="5.00 A"/>
    <property type="chains" value="Ad=1-56"/>
</dbReference>
<dbReference type="PDB" id="5A2Q">
    <property type="method" value="EM"/>
    <property type="resolution" value="3.90 A"/>
    <property type="chains" value="d=2-56"/>
</dbReference>
<dbReference type="PDB" id="5AJ0">
    <property type="method" value="EM"/>
    <property type="resolution" value="3.50 A"/>
    <property type="chains" value="Bd=1-56"/>
</dbReference>
<dbReference type="PDB" id="5FLX">
    <property type="method" value="EM"/>
    <property type="resolution" value="3.90 A"/>
    <property type="chains" value="d=1-56"/>
</dbReference>
<dbReference type="PDB" id="5LKS">
    <property type="method" value="EM"/>
    <property type="resolution" value="3.60 A"/>
    <property type="chains" value="Sd=1-56"/>
</dbReference>
<dbReference type="PDB" id="5OA3">
    <property type="method" value="EM"/>
    <property type="resolution" value="4.30 A"/>
    <property type="chains" value="d=2-56"/>
</dbReference>
<dbReference type="PDB" id="5T2C">
    <property type="method" value="EM"/>
    <property type="resolution" value="3.60 A"/>
    <property type="chains" value="AG=1-56"/>
</dbReference>
<dbReference type="PDB" id="5VYC">
    <property type="method" value="X-ray"/>
    <property type="resolution" value="6.00 A"/>
    <property type="chains" value="d1/d2/d3/d4/d5/d6=1-56"/>
</dbReference>
<dbReference type="PDB" id="6FEC">
    <property type="method" value="EM"/>
    <property type="resolution" value="6.30 A"/>
    <property type="chains" value="J=4-56"/>
</dbReference>
<dbReference type="PDB" id="6G51">
    <property type="method" value="EM"/>
    <property type="resolution" value="4.10 A"/>
    <property type="chains" value="d=1-56"/>
</dbReference>
<dbReference type="PDB" id="6G53">
    <property type="method" value="EM"/>
    <property type="resolution" value="4.50 A"/>
    <property type="chains" value="d=1-56"/>
</dbReference>
<dbReference type="PDB" id="6G5H">
    <property type="method" value="EM"/>
    <property type="resolution" value="3.60 A"/>
    <property type="chains" value="d=1-56"/>
</dbReference>
<dbReference type="PDB" id="6G5I">
    <property type="method" value="EM"/>
    <property type="resolution" value="3.50 A"/>
    <property type="chains" value="d=1-56"/>
</dbReference>
<dbReference type="PDB" id="6IP5">
    <property type="method" value="EM"/>
    <property type="resolution" value="3.90 A"/>
    <property type="chains" value="3E=1-56"/>
</dbReference>
<dbReference type="PDB" id="6IP6">
    <property type="method" value="EM"/>
    <property type="resolution" value="4.50 A"/>
    <property type="chains" value="3E=1-56"/>
</dbReference>
<dbReference type="PDB" id="6IP8">
    <property type="method" value="EM"/>
    <property type="resolution" value="3.90 A"/>
    <property type="chains" value="3E=1-56"/>
</dbReference>
<dbReference type="PDB" id="6OLE">
    <property type="method" value="EM"/>
    <property type="resolution" value="3.10 A"/>
    <property type="chains" value="Sd=2-56"/>
</dbReference>
<dbReference type="PDB" id="6OLF">
    <property type="method" value="EM"/>
    <property type="resolution" value="3.90 A"/>
    <property type="chains" value="Sd=2-56"/>
</dbReference>
<dbReference type="PDB" id="6OLG">
    <property type="method" value="EM"/>
    <property type="resolution" value="3.40 A"/>
    <property type="chains" value="Bd=5-55"/>
</dbReference>
<dbReference type="PDB" id="6OLI">
    <property type="method" value="EM"/>
    <property type="resolution" value="3.50 A"/>
    <property type="chains" value="Sd=2-56"/>
</dbReference>
<dbReference type="PDB" id="6OLZ">
    <property type="method" value="EM"/>
    <property type="resolution" value="3.90 A"/>
    <property type="chains" value="Bd=5-55"/>
</dbReference>
<dbReference type="PDB" id="6OM0">
    <property type="method" value="EM"/>
    <property type="resolution" value="3.10 A"/>
    <property type="chains" value="Sd=2-56"/>
</dbReference>
<dbReference type="PDB" id="6OM7">
    <property type="method" value="EM"/>
    <property type="resolution" value="3.70 A"/>
    <property type="chains" value="Sd=2-56"/>
</dbReference>
<dbReference type="PDB" id="6QZP">
    <property type="method" value="EM"/>
    <property type="resolution" value="2.90 A"/>
    <property type="chains" value="Sd=2-56"/>
</dbReference>
<dbReference type="PDB" id="6XA1">
    <property type="method" value="EM"/>
    <property type="resolution" value="2.80 A"/>
    <property type="chains" value="Sd=2-56"/>
</dbReference>
<dbReference type="PDB" id="6Y0G">
    <property type="method" value="EM"/>
    <property type="resolution" value="3.20 A"/>
    <property type="chains" value="Sd=1-56"/>
</dbReference>
<dbReference type="PDB" id="6Y2L">
    <property type="method" value="EM"/>
    <property type="resolution" value="3.00 A"/>
    <property type="chains" value="Sd=1-56"/>
</dbReference>
<dbReference type="PDB" id="6Y57">
    <property type="method" value="EM"/>
    <property type="resolution" value="3.50 A"/>
    <property type="chains" value="Sd=1-56"/>
</dbReference>
<dbReference type="PDB" id="6YBS">
    <property type="method" value="EM"/>
    <property type="resolution" value="3.10 A"/>
    <property type="chains" value="i=1-56"/>
</dbReference>
<dbReference type="PDB" id="6Z6L">
    <property type="method" value="EM"/>
    <property type="resolution" value="3.00 A"/>
    <property type="chains" value="Sd=1-56"/>
</dbReference>
<dbReference type="PDB" id="6Z6M">
    <property type="method" value="EM"/>
    <property type="resolution" value="3.10 A"/>
    <property type="chains" value="Sd=1-56"/>
</dbReference>
<dbReference type="PDB" id="6Z6N">
    <property type="method" value="EM"/>
    <property type="resolution" value="2.90 A"/>
    <property type="chains" value="Sd=1-56"/>
</dbReference>
<dbReference type="PDB" id="6ZLW">
    <property type="method" value="EM"/>
    <property type="resolution" value="2.60 A"/>
    <property type="chains" value="f=1-56"/>
</dbReference>
<dbReference type="PDB" id="6ZM7">
    <property type="method" value="EM"/>
    <property type="resolution" value="2.70 A"/>
    <property type="chains" value="Sd=1-56"/>
</dbReference>
<dbReference type="PDB" id="6ZME">
    <property type="method" value="EM"/>
    <property type="resolution" value="3.00 A"/>
    <property type="chains" value="Sd=1-56"/>
</dbReference>
<dbReference type="PDB" id="6ZMI">
    <property type="method" value="EM"/>
    <property type="resolution" value="2.60 A"/>
    <property type="chains" value="Sd=1-56"/>
</dbReference>
<dbReference type="PDB" id="6ZMO">
    <property type="method" value="EM"/>
    <property type="resolution" value="3.10 A"/>
    <property type="chains" value="Sd=1-56"/>
</dbReference>
<dbReference type="PDB" id="6ZMT">
    <property type="method" value="EM"/>
    <property type="resolution" value="3.00 A"/>
    <property type="chains" value="f=1-56"/>
</dbReference>
<dbReference type="PDB" id="6ZMW">
    <property type="method" value="EM"/>
    <property type="resolution" value="3.70 A"/>
    <property type="chains" value="i=1-56"/>
</dbReference>
<dbReference type="PDB" id="6ZN5">
    <property type="method" value="EM"/>
    <property type="resolution" value="3.20 A"/>
    <property type="chains" value="f=3-56"/>
</dbReference>
<dbReference type="PDB" id="6ZOJ">
    <property type="method" value="EM"/>
    <property type="resolution" value="2.80 A"/>
    <property type="chains" value="d=2-56"/>
</dbReference>
<dbReference type="PDB" id="6ZOL">
    <property type="method" value="EM"/>
    <property type="resolution" value="2.80 A"/>
    <property type="chains" value="d=2-56"/>
</dbReference>
<dbReference type="PDB" id="6ZON">
    <property type="method" value="EM"/>
    <property type="resolution" value="3.00 A"/>
    <property type="chains" value="l=1-56"/>
</dbReference>
<dbReference type="PDB" id="6ZP4">
    <property type="method" value="EM"/>
    <property type="resolution" value="2.90 A"/>
    <property type="chains" value="l=1-56"/>
</dbReference>
<dbReference type="PDB" id="6ZUO">
    <property type="method" value="EM"/>
    <property type="resolution" value="3.10 A"/>
    <property type="chains" value="d=1-56"/>
</dbReference>
<dbReference type="PDB" id="6ZV6">
    <property type="method" value="EM"/>
    <property type="resolution" value="2.90 A"/>
    <property type="chains" value="d=1-56"/>
</dbReference>
<dbReference type="PDB" id="6ZVH">
    <property type="method" value="EM"/>
    <property type="resolution" value="2.90 A"/>
    <property type="chains" value="d=2-56"/>
</dbReference>
<dbReference type="PDB" id="6ZVJ">
    <property type="method" value="EM"/>
    <property type="resolution" value="3.80 A"/>
    <property type="chains" value="l=2-55"/>
</dbReference>
<dbReference type="PDB" id="6ZXD">
    <property type="method" value="EM"/>
    <property type="resolution" value="3.20 A"/>
    <property type="chains" value="d=1-56"/>
</dbReference>
<dbReference type="PDB" id="6ZXE">
    <property type="method" value="EM"/>
    <property type="resolution" value="3.00 A"/>
    <property type="chains" value="d=1-56"/>
</dbReference>
<dbReference type="PDB" id="6ZXF">
    <property type="method" value="EM"/>
    <property type="resolution" value="3.70 A"/>
    <property type="chains" value="d=1-56"/>
</dbReference>
<dbReference type="PDB" id="6ZXG">
    <property type="method" value="EM"/>
    <property type="resolution" value="2.60 A"/>
    <property type="chains" value="d=1-56"/>
</dbReference>
<dbReference type="PDB" id="6ZXH">
    <property type="method" value="EM"/>
    <property type="resolution" value="2.70 A"/>
    <property type="chains" value="d=1-56"/>
</dbReference>
<dbReference type="PDB" id="7A09">
    <property type="method" value="EM"/>
    <property type="resolution" value="3.50 A"/>
    <property type="chains" value="l=1-56"/>
</dbReference>
<dbReference type="PDB" id="7K5I">
    <property type="method" value="EM"/>
    <property type="resolution" value="2.90 A"/>
    <property type="chains" value="d=1-56"/>
</dbReference>
<dbReference type="PDB" id="7QP6">
    <property type="method" value="EM"/>
    <property type="resolution" value="4.70 A"/>
    <property type="chains" value="i=1-56"/>
</dbReference>
<dbReference type="PDB" id="7QP7">
    <property type="method" value="EM"/>
    <property type="resolution" value="3.70 A"/>
    <property type="chains" value="i=1-56"/>
</dbReference>
<dbReference type="PDB" id="7R4X">
    <property type="method" value="EM"/>
    <property type="resolution" value="2.15 A"/>
    <property type="chains" value="d=1-56"/>
</dbReference>
<dbReference type="PDB" id="7TQL">
    <property type="method" value="EM"/>
    <property type="resolution" value="3.40 A"/>
    <property type="chains" value="f=3-56"/>
</dbReference>
<dbReference type="PDB" id="7XNX">
    <property type="method" value="EM"/>
    <property type="resolution" value="2.70 A"/>
    <property type="chains" value="Sd=1-56"/>
</dbReference>
<dbReference type="PDB" id="7XNY">
    <property type="method" value="EM"/>
    <property type="resolution" value="2.50 A"/>
    <property type="chains" value="Sd=1-56"/>
</dbReference>
<dbReference type="PDB" id="8G5Y">
    <property type="method" value="EM"/>
    <property type="resolution" value="2.29 A"/>
    <property type="chains" value="Sd=1-56"/>
</dbReference>
<dbReference type="PDB" id="8G5Z">
    <property type="method" value="EM"/>
    <property type="resolution" value="2.64 A"/>
    <property type="chains" value="Sd=2-56"/>
</dbReference>
<dbReference type="PDB" id="8G60">
    <property type="method" value="EM"/>
    <property type="resolution" value="2.54 A"/>
    <property type="chains" value="Sd=1-56"/>
</dbReference>
<dbReference type="PDB" id="8G61">
    <property type="method" value="EM"/>
    <property type="resolution" value="2.94 A"/>
    <property type="chains" value="Sd=1-56"/>
</dbReference>
<dbReference type="PDB" id="8G6J">
    <property type="method" value="EM"/>
    <property type="resolution" value="2.80 A"/>
    <property type="chains" value="Sd=1-56"/>
</dbReference>
<dbReference type="PDB" id="8GLP">
    <property type="method" value="EM"/>
    <property type="resolution" value="1.67 A"/>
    <property type="chains" value="Sd=1-56"/>
</dbReference>
<dbReference type="PDB" id="8IFD">
    <property type="method" value="EM"/>
    <property type="resolution" value="2.59 A"/>
    <property type="chains" value="3E=1-56"/>
</dbReference>
<dbReference type="PDB" id="8IFE">
    <property type="method" value="EM"/>
    <property type="resolution" value="2.57 A"/>
    <property type="chains" value="3E=1-56"/>
</dbReference>
<dbReference type="PDB" id="8JDJ">
    <property type="method" value="EM"/>
    <property type="resolution" value="2.50 A"/>
    <property type="chains" value="AP=1-56"/>
</dbReference>
<dbReference type="PDB" id="8JDK">
    <property type="method" value="EM"/>
    <property type="resolution" value="2.26 A"/>
    <property type="chains" value="AP=1-56"/>
</dbReference>
<dbReference type="PDB" id="8JDL">
    <property type="method" value="EM"/>
    <property type="resolution" value="2.42 A"/>
    <property type="chains" value="AP=1-56"/>
</dbReference>
<dbReference type="PDB" id="8JDM">
    <property type="method" value="EM"/>
    <property type="resolution" value="2.67 A"/>
    <property type="chains" value="AP=1-56"/>
</dbReference>
<dbReference type="PDB" id="8K2C">
    <property type="method" value="EM"/>
    <property type="resolution" value="2.40 A"/>
    <property type="chains" value="Sd=1-56"/>
</dbReference>
<dbReference type="PDB" id="8OZ0">
    <property type="method" value="EM"/>
    <property type="resolution" value="3.50 A"/>
    <property type="chains" value="o=1-56"/>
</dbReference>
<dbReference type="PDB" id="8PJ1">
    <property type="method" value="EM"/>
    <property type="resolution" value="3.40 A"/>
    <property type="chains" value="i=1-56"/>
</dbReference>
<dbReference type="PDB" id="8PJ2">
    <property type="method" value="EM"/>
    <property type="resolution" value="3.40 A"/>
    <property type="chains" value="i=1-56"/>
</dbReference>
<dbReference type="PDB" id="8PJ3">
    <property type="method" value="EM"/>
    <property type="resolution" value="3.70 A"/>
    <property type="chains" value="i=1-56"/>
</dbReference>
<dbReference type="PDB" id="8PJ4">
    <property type="method" value="EM"/>
    <property type="resolution" value="3.20 A"/>
    <property type="chains" value="i=1-56"/>
</dbReference>
<dbReference type="PDB" id="8PJ5">
    <property type="method" value="EM"/>
    <property type="resolution" value="2.90 A"/>
    <property type="chains" value="i=1-56"/>
</dbReference>
<dbReference type="PDB" id="8PJ6">
    <property type="method" value="EM"/>
    <property type="resolution" value="2.90 A"/>
    <property type="chains" value="i=1-56"/>
</dbReference>
<dbReference type="PDB" id="8PPK">
    <property type="method" value="EM"/>
    <property type="resolution" value="2.98 A"/>
    <property type="chains" value="d=1-56"/>
</dbReference>
<dbReference type="PDB" id="8PPL">
    <property type="method" value="EM"/>
    <property type="resolution" value="2.65 A"/>
    <property type="chains" value="Ad=1-56"/>
</dbReference>
<dbReference type="PDB" id="8QOI">
    <property type="method" value="EM"/>
    <property type="resolution" value="1.90 A"/>
    <property type="chains" value="Sd=1-56"/>
</dbReference>
<dbReference type="PDB" id="8T4S">
    <property type="method" value="EM"/>
    <property type="resolution" value="2.60 A"/>
    <property type="chains" value="d=1-56"/>
</dbReference>
<dbReference type="PDB" id="8UKB">
    <property type="method" value="EM"/>
    <property type="resolution" value="3.05 A"/>
    <property type="chains" value="Sd=2-56"/>
</dbReference>
<dbReference type="PDB" id="8XP2">
    <property type="method" value="EM"/>
    <property type="resolution" value="3.20 A"/>
    <property type="chains" value="Sd=1-56"/>
</dbReference>
<dbReference type="PDB" id="8XP3">
    <property type="method" value="EM"/>
    <property type="resolution" value="3.40 A"/>
    <property type="chains" value="Sd=1-56"/>
</dbReference>
<dbReference type="PDB" id="8XSX">
    <property type="method" value="EM"/>
    <property type="resolution" value="2.40 A"/>
    <property type="chains" value="Sd=1-56"/>
</dbReference>
<dbReference type="PDB" id="8XSY">
    <property type="method" value="EM"/>
    <property type="resolution" value="3.00 A"/>
    <property type="chains" value="Sd=1-56"/>
</dbReference>
<dbReference type="PDB" id="8XSZ">
    <property type="method" value="EM"/>
    <property type="resolution" value="3.20 A"/>
    <property type="chains" value="Sd=1-56"/>
</dbReference>
<dbReference type="PDB" id="8XXL">
    <property type="method" value="EM"/>
    <property type="resolution" value="2.90 A"/>
    <property type="chains" value="Sd=1-56"/>
</dbReference>
<dbReference type="PDB" id="8XXM">
    <property type="method" value="EM"/>
    <property type="resolution" value="3.20 A"/>
    <property type="chains" value="Sd=1-56"/>
</dbReference>
<dbReference type="PDB" id="8XXN">
    <property type="method" value="EM"/>
    <property type="resolution" value="3.60 A"/>
    <property type="chains" value="Sd=1-56"/>
</dbReference>
<dbReference type="PDB" id="8Y0W">
    <property type="method" value="EM"/>
    <property type="resolution" value="3.40 A"/>
    <property type="chains" value="Sd=1-56"/>
</dbReference>
<dbReference type="PDB" id="8Y0X">
    <property type="method" value="EM"/>
    <property type="resolution" value="3.30 A"/>
    <property type="chains" value="Sd=1-56"/>
</dbReference>
<dbReference type="PDB" id="8YOO">
    <property type="method" value="EM"/>
    <property type="resolution" value="2.00 A"/>
    <property type="chains" value="Sd=1-56"/>
</dbReference>
<dbReference type="PDB" id="8YOP">
    <property type="method" value="EM"/>
    <property type="resolution" value="2.20 A"/>
    <property type="chains" value="Sd=1-56"/>
</dbReference>
<dbReference type="PDB" id="8ZDB">
    <property type="method" value="EM"/>
    <property type="resolution" value="3.60 A"/>
    <property type="chains" value="d=1-56"/>
</dbReference>
<dbReference type="PDB" id="8ZDC">
    <property type="method" value="EM"/>
    <property type="resolution" value="3.80 A"/>
    <property type="chains" value="d=1-56"/>
</dbReference>
<dbReference type="PDB" id="8ZDD">
    <property type="method" value="EM"/>
    <property type="resolution" value="3.70 A"/>
    <property type="chains" value="d=1-56"/>
</dbReference>
<dbReference type="PDB" id="9BKD">
    <property type="method" value="EM"/>
    <property type="resolution" value="2.60 A"/>
    <property type="chains" value="i=1-56"/>
</dbReference>
<dbReference type="PDB" id="9BLN">
    <property type="method" value="EM"/>
    <property type="resolution" value="3.90 A"/>
    <property type="chains" value="i=1-56"/>
</dbReference>
<dbReference type="PDB" id="9C3H">
    <property type="method" value="EM"/>
    <property type="resolution" value="2.00 A"/>
    <property type="chains" value="Sf=1-56"/>
</dbReference>
<dbReference type="PDB" id="9G8M">
    <property type="method" value="EM"/>
    <property type="resolution" value="3.30 A"/>
    <property type="chains" value="Sd=1-56"/>
</dbReference>
<dbReference type="PDB" id="9G8O">
    <property type="method" value="EM"/>
    <property type="resolution" value="3.40 A"/>
    <property type="chains" value="Sd=1-56"/>
</dbReference>
<dbReference type="PDBsum" id="4UG0"/>
<dbReference type="PDBsum" id="4V6X"/>
<dbReference type="PDBsum" id="5A2Q"/>
<dbReference type="PDBsum" id="5AJ0"/>
<dbReference type="PDBsum" id="5FLX"/>
<dbReference type="PDBsum" id="5LKS"/>
<dbReference type="PDBsum" id="5OA3"/>
<dbReference type="PDBsum" id="5T2C"/>
<dbReference type="PDBsum" id="5VYC"/>
<dbReference type="PDBsum" id="6FEC"/>
<dbReference type="PDBsum" id="6G51"/>
<dbReference type="PDBsum" id="6G53"/>
<dbReference type="PDBsum" id="6G5H"/>
<dbReference type="PDBsum" id="6G5I"/>
<dbReference type="PDBsum" id="6IP5"/>
<dbReference type="PDBsum" id="6IP6"/>
<dbReference type="PDBsum" id="6IP8"/>
<dbReference type="PDBsum" id="6OLE"/>
<dbReference type="PDBsum" id="6OLF"/>
<dbReference type="PDBsum" id="6OLG"/>
<dbReference type="PDBsum" id="6OLI"/>
<dbReference type="PDBsum" id="6OLZ"/>
<dbReference type="PDBsum" id="6OM0"/>
<dbReference type="PDBsum" id="6OM7"/>
<dbReference type="PDBsum" id="6QZP"/>
<dbReference type="PDBsum" id="6XA1"/>
<dbReference type="PDBsum" id="6Y0G"/>
<dbReference type="PDBsum" id="6Y2L"/>
<dbReference type="PDBsum" id="6Y57"/>
<dbReference type="PDBsum" id="6YBS"/>
<dbReference type="PDBsum" id="6Z6L"/>
<dbReference type="PDBsum" id="6Z6M"/>
<dbReference type="PDBsum" id="6Z6N"/>
<dbReference type="PDBsum" id="6ZLW"/>
<dbReference type="PDBsum" id="6ZM7"/>
<dbReference type="PDBsum" id="6ZME"/>
<dbReference type="PDBsum" id="6ZMI"/>
<dbReference type="PDBsum" id="6ZMO"/>
<dbReference type="PDBsum" id="6ZMT"/>
<dbReference type="PDBsum" id="6ZMW"/>
<dbReference type="PDBsum" id="6ZN5"/>
<dbReference type="PDBsum" id="6ZOJ"/>
<dbReference type="PDBsum" id="6ZOL"/>
<dbReference type="PDBsum" id="6ZON"/>
<dbReference type="PDBsum" id="6ZP4"/>
<dbReference type="PDBsum" id="6ZUO"/>
<dbReference type="PDBsum" id="6ZV6"/>
<dbReference type="PDBsum" id="6ZVH"/>
<dbReference type="PDBsum" id="6ZVJ"/>
<dbReference type="PDBsum" id="6ZXD"/>
<dbReference type="PDBsum" id="6ZXE"/>
<dbReference type="PDBsum" id="6ZXF"/>
<dbReference type="PDBsum" id="6ZXG"/>
<dbReference type="PDBsum" id="6ZXH"/>
<dbReference type="PDBsum" id="7A09"/>
<dbReference type="PDBsum" id="7K5I"/>
<dbReference type="PDBsum" id="7QP6"/>
<dbReference type="PDBsum" id="7QP7"/>
<dbReference type="PDBsum" id="7R4X"/>
<dbReference type="PDBsum" id="7TQL"/>
<dbReference type="PDBsum" id="7XNX"/>
<dbReference type="PDBsum" id="7XNY"/>
<dbReference type="PDBsum" id="8G5Y"/>
<dbReference type="PDBsum" id="8G5Z"/>
<dbReference type="PDBsum" id="8G60"/>
<dbReference type="PDBsum" id="8G61"/>
<dbReference type="PDBsum" id="8G6J"/>
<dbReference type="PDBsum" id="8GLP"/>
<dbReference type="PDBsum" id="8IFD"/>
<dbReference type="PDBsum" id="8IFE"/>
<dbReference type="PDBsum" id="8JDJ"/>
<dbReference type="PDBsum" id="8JDK"/>
<dbReference type="PDBsum" id="8JDL"/>
<dbReference type="PDBsum" id="8JDM"/>
<dbReference type="PDBsum" id="8K2C"/>
<dbReference type="PDBsum" id="8OZ0"/>
<dbReference type="PDBsum" id="8PJ1"/>
<dbReference type="PDBsum" id="8PJ2"/>
<dbReference type="PDBsum" id="8PJ3"/>
<dbReference type="PDBsum" id="8PJ4"/>
<dbReference type="PDBsum" id="8PJ5"/>
<dbReference type="PDBsum" id="8PJ6"/>
<dbReference type="PDBsum" id="8PPK"/>
<dbReference type="PDBsum" id="8PPL"/>
<dbReference type="PDBsum" id="8QOI"/>
<dbReference type="PDBsum" id="8T4S"/>
<dbReference type="PDBsum" id="8UKB"/>
<dbReference type="PDBsum" id="8XP2"/>
<dbReference type="PDBsum" id="8XP3"/>
<dbReference type="PDBsum" id="8XSX"/>
<dbReference type="PDBsum" id="8XSY"/>
<dbReference type="PDBsum" id="8XSZ"/>
<dbReference type="PDBsum" id="8XXL"/>
<dbReference type="PDBsum" id="8XXM"/>
<dbReference type="PDBsum" id="8XXN"/>
<dbReference type="PDBsum" id="8Y0W"/>
<dbReference type="PDBsum" id="8Y0X"/>
<dbReference type="PDBsum" id="8YOO"/>
<dbReference type="PDBsum" id="8YOP"/>
<dbReference type="PDBsum" id="8ZDB"/>
<dbReference type="PDBsum" id="8ZDC"/>
<dbReference type="PDBsum" id="8ZDD"/>
<dbReference type="PDBsum" id="9BKD"/>
<dbReference type="PDBsum" id="9BLN"/>
<dbReference type="PDBsum" id="9C3H"/>
<dbReference type="PDBsum" id="9G8M"/>
<dbReference type="PDBsum" id="9G8O"/>
<dbReference type="EMDB" id="EMD-10668"/>
<dbReference type="EMDB" id="EMD-10674"/>
<dbReference type="EMDB" id="EMD-10690"/>
<dbReference type="EMDB" id="EMD-10772"/>
<dbReference type="EMDB" id="EMD-11098"/>
<dbReference type="EMDB" id="EMD-11099"/>
<dbReference type="EMDB" id="EMD-11100"/>
<dbReference type="EMDB" id="EMD-11276"/>
<dbReference type="EMDB" id="EMD-11288"/>
<dbReference type="EMDB" id="EMD-11289"/>
<dbReference type="EMDB" id="EMD-11292"/>
<dbReference type="EMDB" id="EMD-11299"/>
<dbReference type="EMDB" id="EMD-11301"/>
<dbReference type="EMDB" id="EMD-11302"/>
<dbReference type="EMDB" id="EMD-11310"/>
<dbReference type="EMDB" id="EMD-11320"/>
<dbReference type="EMDB" id="EMD-11322"/>
<dbReference type="EMDB" id="EMD-11325"/>
<dbReference type="EMDB" id="EMD-11335"/>
<dbReference type="EMDB" id="EMD-11440"/>
<dbReference type="EMDB" id="EMD-11441"/>
<dbReference type="EMDB" id="EMD-11456"/>
<dbReference type="EMDB" id="EMD-11458"/>
<dbReference type="EMDB" id="EMD-11517"/>
<dbReference type="EMDB" id="EMD-11518"/>
<dbReference type="EMDB" id="EMD-11519"/>
<dbReference type="EMDB" id="EMD-11520"/>
<dbReference type="EMDB" id="EMD-11521"/>
<dbReference type="EMDB" id="EMD-11602"/>
<dbReference type="EMDB" id="EMD-14113"/>
<dbReference type="EMDB" id="EMD-14114"/>
<dbReference type="EMDB" id="EMD-14317"/>
<dbReference type="EMDB" id="EMD-17297"/>
<dbReference type="EMDB" id="EMD-17696"/>
<dbReference type="EMDB" id="EMD-17697"/>
<dbReference type="EMDB" id="EMD-17698"/>
<dbReference type="EMDB" id="EMD-17699"/>
<dbReference type="EMDB" id="EMD-17700"/>
<dbReference type="EMDB" id="EMD-17701"/>
<dbReference type="EMDB" id="EMD-17804"/>
<dbReference type="EMDB" id="EMD-17805"/>
<dbReference type="EMDB" id="EMD-18539"/>
<dbReference type="EMDB" id="EMD-22681"/>
<dbReference type="EMDB" id="EMD-26067"/>
<dbReference type="EMDB" id="EMD-29757"/>
<dbReference type="EMDB" id="EMD-29758"/>
<dbReference type="EMDB" id="EMD-29759"/>
<dbReference type="EMDB" id="EMD-29760"/>
<dbReference type="EMDB" id="EMD-29771"/>
<dbReference type="EMDB" id="EMD-33329"/>
<dbReference type="EMDB" id="EMD-33330"/>
<dbReference type="EMDB" id="EMD-35413"/>
<dbReference type="EMDB" id="EMD-35414"/>
<dbReference type="EMDB" id="EMD-36178"/>
<dbReference type="EMDB" id="EMD-36179"/>
<dbReference type="EMDB" id="EMD-36180"/>
<dbReference type="EMDB" id="EMD-36181"/>
<dbReference type="EMDB" id="EMD-36838"/>
<dbReference type="EMDB" id="EMD-3770"/>
<dbReference type="EMDB" id="EMD-38548"/>
<dbReference type="EMDB" id="EMD-38549"/>
<dbReference type="EMDB" id="EMD-38629"/>
<dbReference type="EMDB" id="EMD-38630"/>
<dbReference type="EMDB" id="EMD-38631"/>
<dbReference type="EMDB" id="EMD-38752"/>
<dbReference type="EMDB" id="EMD-38753"/>
<dbReference type="EMDB" id="EMD-38754"/>
<dbReference type="EMDB" id="EMD-39455"/>
<dbReference type="EMDB" id="EMD-39456"/>
<dbReference type="EMDB" id="EMD-39956"/>
<dbReference type="EMDB" id="EMD-39957"/>
<dbReference type="EMDB" id="EMD-39958"/>
<dbReference type="EMDB" id="EMD-40205"/>
<dbReference type="EMDB" id="EMD-4070"/>
<dbReference type="EMDB" id="EMD-41039"/>
<dbReference type="EMDB" id="EMD-42351"/>
<dbReference type="EMDB" id="EMD-4242"/>
<dbReference type="EMDB" id="EMD-4350"/>
<dbReference type="EMDB" id="EMD-4351"/>
<dbReference type="EMDB" id="EMD-4352"/>
<dbReference type="EMDB" id="EMD-4353"/>
<dbReference type="EMDB" id="EMD-44641"/>
<dbReference type="EMDB" id="EMD-44671"/>
<dbReference type="EMDB" id="EMD-45170"/>
<dbReference type="EMDB" id="EMD-51132"/>
<dbReference type="EMDB" id="EMD-51134"/>
<dbReference type="EMDB" id="EMD-9701"/>
<dbReference type="EMDB" id="EMD-9702"/>
<dbReference type="EMDB" id="EMD-9703"/>
<dbReference type="SMR" id="P62273"/>
<dbReference type="BioGRID" id="112149">
    <property type="interactions" value="194"/>
</dbReference>
<dbReference type="ComplexPortal" id="CPX-5223">
    <property type="entry name" value="40S cytosolic small ribosomal subunit"/>
</dbReference>
<dbReference type="CORUM" id="P62273"/>
<dbReference type="FunCoup" id="P62273">
    <property type="interactions" value="1545"/>
</dbReference>
<dbReference type="IntAct" id="P62273">
    <property type="interactions" value="59"/>
</dbReference>
<dbReference type="MINT" id="P62273"/>
<dbReference type="STRING" id="9606.ENSP00000379339"/>
<dbReference type="GlyGen" id="P62273">
    <property type="glycosylation" value="1 site, 1 O-linked glycan (1 site)"/>
</dbReference>
<dbReference type="iPTMnet" id="P62273"/>
<dbReference type="PhosphoSitePlus" id="P62273"/>
<dbReference type="SwissPalm" id="P62273"/>
<dbReference type="BioMuta" id="RPS29"/>
<dbReference type="DMDM" id="50403626"/>
<dbReference type="jPOST" id="P62273"/>
<dbReference type="MassIVE" id="P62273"/>
<dbReference type="PaxDb" id="9606-ENSP00000379339"/>
<dbReference type="PeptideAtlas" id="P62273"/>
<dbReference type="ProteomicsDB" id="57382">
    <molecule id="P62273-1"/>
</dbReference>
<dbReference type="ProteomicsDB" id="57383">
    <molecule id="P62273-2"/>
</dbReference>
<dbReference type="Pumba" id="P62273"/>
<dbReference type="TopDownProteomics" id="P62273-1">
    <molecule id="P62273-1"/>
</dbReference>
<dbReference type="TopDownProteomics" id="P62273-2">
    <molecule id="P62273-2"/>
</dbReference>
<dbReference type="Antibodypedia" id="179">
    <property type="antibodies" value="83 antibodies from 21 providers"/>
</dbReference>
<dbReference type="DNASU" id="6235"/>
<dbReference type="Ensembl" id="ENST00000245458.11">
    <molecule id="P62273-1"/>
    <property type="protein sequence ID" value="ENSP00000245458.7"/>
    <property type="gene ID" value="ENSG00000213741.11"/>
</dbReference>
<dbReference type="Ensembl" id="ENST00000396020.7">
    <molecule id="P62273-2"/>
    <property type="protein sequence ID" value="ENSP00000379339.3"/>
    <property type="gene ID" value="ENSG00000213741.11"/>
</dbReference>
<dbReference type="Ensembl" id="ENST00000556230.2">
    <molecule id="P62273-1"/>
    <property type="protein sequence ID" value="ENSP00000495033.1"/>
    <property type="gene ID" value="ENSG00000213741.11"/>
</dbReference>
<dbReference type="GeneID" id="6235"/>
<dbReference type="KEGG" id="hsa:6235"/>
<dbReference type="MANE-Select" id="ENST00000245458.11">
    <property type="protein sequence ID" value="ENSP00000245458.7"/>
    <property type="RefSeq nucleotide sequence ID" value="NM_001032.5"/>
    <property type="RefSeq protein sequence ID" value="NP_001023.1"/>
</dbReference>
<dbReference type="UCSC" id="uc001wwl.5">
    <molecule id="P62273-1"/>
    <property type="organism name" value="human"/>
</dbReference>
<dbReference type="AGR" id="HGNC:10419"/>
<dbReference type="CTD" id="6235"/>
<dbReference type="DisGeNET" id="6235"/>
<dbReference type="GeneCards" id="RPS29"/>
<dbReference type="GeneReviews" id="RPS29"/>
<dbReference type="HGNC" id="HGNC:10419">
    <property type="gene designation" value="RPS29"/>
</dbReference>
<dbReference type="HPA" id="ENSG00000213741">
    <property type="expression patterns" value="Low tissue specificity"/>
</dbReference>
<dbReference type="MalaCards" id="RPS29"/>
<dbReference type="MIM" id="603633">
    <property type="type" value="gene"/>
</dbReference>
<dbReference type="MIM" id="615909">
    <property type="type" value="phenotype"/>
</dbReference>
<dbReference type="neXtProt" id="NX_P62273"/>
<dbReference type="OpenTargets" id="ENSG00000213741"/>
<dbReference type="Orphanet" id="124">
    <property type="disease" value="Diamond-Blackfan anemia"/>
</dbReference>
<dbReference type="PharmGKB" id="PA34826"/>
<dbReference type="VEuPathDB" id="HostDB:ENSG00000213741"/>
<dbReference type="eggNOG" id="KOG3506">
    <property type="taxonomic scope" value="Eukaryota"/>
</dbReference>
<dbReference type="GeneTree" id="ENSGT00940000154720"/>
<dbReference type="HOGENOM" id="CLU_177289_1_0_1"/>
<dbReference type="InParanoid" id="P62273"/>
<dbReference type="OMA" id="HCFREIA"/>
<dbReference type="OrthoDB" id="9816073at2759"/>
<dbReference type="PAN-GO" id="P62273">
    <property type="GO annotations" value="3 GO annotations based on evolutionary models"/>
</dbReference>
<dbReference type="PhylomeDB" id="P62273"/>
<dbReference type="TreeFam" id="TF300217"/>
<dbReference type="PathwayCommons" id="P62273"/>
<dbReference type="Reactome" id="R-HSA-156827">
    <property type="pathway name" value="L13a-mediated translational silencing of Ceruloplasmin expression"/>
</dbReference>
<dbReference type="Reactome" id="R-HSA-156902">
    <property type="pathway name" value="Peptide chain elongation"/>
</dbReference>
<dbReference type="Reactome" id="R-HSA-1799339">
    <property type="pathway name" value="SRP-dependent cotranslational protein targeting to membrane"/>
</dbReference>
<dbReference type="Reactome" id="R-HSA-192823">
    <property type="pathway name" value="Viral mRNA Translation"/>
</dbReference>
<dbReference type="Reactome" id="R-HSA-2408557">
    <property type="pathway name" value="Selenocysteine synthesis"/>
</dbReference>
<dbReference type="Reactome" id="R-HSA-6791226">
    <property type="pathway name" value="Major pathway of rRNA processing in the nucleolus and cytosol"/>
</dbReference>
<dbReference type="Reactome" id="R-HSA-72649">
    <property type="pathway name" value="Translation initiation complex formation"/>
</dbReference>
<dbReference type="Reactome" id="R-HSA-72689">
    <property type="pathway name" value="Formation of a pool of free 40S subunits"/>
</dbReference>
<dbReference type="Reactome" id="R-HSA-72695">
    <property type="pathway name" value="Formation of the ternary complex, and subsequently, the 43S complex"/>
</dbReference>
<dbReference type="Reactome" id="R-HSA-72702">
    <property type="pathway name" value="Ribosomal scanning and start codon recognition"/>
</dbReference>
<dbReference type="Reactome" id="R-HSA-72706">
    <property type="pathway name" value="GTP hydrolysis and joining of the 60S ribosomal subunit"/>
</dbReference>
<dbReference type="Reactome" id="R-HSA-72764">
    <property type="pathway name" value="Eukaryotic Translation Termination"/>
</dbReference>
<dbReference type="Reactome" id="R-HSA-9010553">
    <property type="pathway name" value="Regulation of expression of SLITs and ROBOs"/>
</dbReference>
<dbReference type="Reactome" id="R-HSA-9633012">
    <property type="pathway name" value="Response of EIF2AK4 (GCN2) to amino acid deficiency"/>
</dbReference>
<dbReference type="Reactome" id="R-HSA-9735869">
    <property type="pathway name" value="SARS-CoV-1 modulates host translation machinery"/>
</dbReference>
<dbReference type="Reactome" id="R-HSA-9754678">
    <property type="pathway name" value="SARS-CoV-2 modulates host translation machinery"/>
</dbReference>
<dbReference type="Reactome" id="R-HSA-975956">
    <property type="pathway name" value="Nonsense Mediated Decay (NMD) independent of the Exon Junction Complex (EJC)"/>
</dbReference>
<dbReference type="Reactome" id="R-HSA-975957">
    <property type="pathway name" value="Nonsense Mediated Decay (NMD) enhanced by the Exon Junction Complex (EJC)"/>
</dbReference>
<dbReference type="SignaLink" id="P62273"/>
<dbReference type="SIGNOR" id="P62273"/>
<dbReference type="BioGRID-ORCS" id="6235">
    <property type="hits" value="721 hits in 1122 CRISPR screens"/>
</dbReference>
<dbReference type="ChiTaRS" id="RPS29">
    <property type="organism name" value="human"/>
</dbReference>
<dbReference type="EvolutionaryTrace" id="P62273"/>
<dbReference type="GeneWiki" id="RPS29"/>
<dbReference type="GenomeRNAi" id="6235"/>
<dbReference type="Pharos" id="P62273">
    <property type="development level" value="Tbio"/>
</dbReference>
<dbReference type="PRO" id="PR:P62273"/>
<dbReference type="Proteomes" id="UP000005640">
    <property type="component" value="Chromosome 14"/>
</dbReference>
<dbReference type="RNAct" id="P62273">
    <property type="molecule type" value="protein"/>
</dbReference>
<dbReference type="Bgee" id="ENSG00000213741">
    <property type="expression patterns" value="Expressed in caput epididymis and 205 other cell types or tissues"/>
</dbReference>
<dbReference type="ExpressionAtlas" id="P62273">
    <property type="expression patterns" value="baseline and differential"/>
</dbReference>
<dbReference type="GO" id="GO:0005737">
    <property type="term" value="C:cytoplasm"/>
    <property type="evidence" value="ECO:0000303"/>
    <property type="project" value="ComplexPortal"/>
</dbReference>
<dbReference type="GO" id="GO:0098556">
    <property type="term" value="C:cytoplasmic side of rough endoplasmic reticulum membrane"/>
    <property type="evidence" value="ECO:0000250"/>
    <property type="project" value="UniProtKB"/>
</dbReference>
<dbReference type="GO" id="GO:0005829">
    <property type="term" value="C:cytosol"/>
    <property type="evidence" value="ECO:0000304"/>
    <property type="project" value="Reactome"/>
</dbReference>
<dbReference type="GO" id="GO:0022627">
    <property type="term" value="C:cytosolic small ribosomal subunit"/>
    <property type="evidence" value="ECO:0000314"/>
    <property type="project" value="UniProtKB"/>
</dbReference>
<dbReference type="GO" id="GO:0070062">
    <property type="term" value="C:extracellular exosome"/>
    <property type="evidence" value="ECO:0007005"/>
    <property type="project" value="UniProtKB"/>
</dbReference>
<dbReference type="GO" id="GO:0005925">
    <property type="term" value="C:focal adhesion"/>
    <property type="evidence" value="ECO:0007005"/>
    <property type="project" value="UniProtKB"/>
</dbReference>
<dbReference type="GO" id="GO:0005654">
    <property type="term" value="C:nucleoplasm"/>
    <property type="evidence" value="ECO:0000304"/>
    <property type="project" value="Reactome"/>
</dbReference>
<dbReference type="GO" id="GO:0005840">
    <property type="term" value="C:ribosome"/>
    <property type="evidence" value="ECO:0000314"/>
    <property type="project" value="UniProtKB"/>
</dbReference>
<dbReference type="GO" id="GO:0015935">
    <property type="term" value="C:small ribosomal subunit"/>
    <property type="evidence" value="ECO:0007005"/>
    <property type="project" value="UniProtKB"/>
</dbReference>
<dbReference type="GO" id="GO:0003735">
    <property type="term" value="F:structural constituent of ribosome"/>
    <property type="evidence" value="ECO:0000314"/>
    <property type="project" value="FlyBase"/>
</dbReference>
<dbReference type="GO" id="GO:0008270">
    <property type="term" value="F:zinc ion binding"/>
    <property type="evidence" value="ECO:0000314"/>
    <property type="project" value="UniProtKB"/>
</dbReference>
<dbReference type="GO" id="GO:0002181">
    <property type="term" value="P:cytoplasmic translation"/>
    <property type="evidence" value="ECO:0000314"/>
    <property type="project" value="UniProtKB"/>
</dbReference>
<dbReference type="GO" id="GO:0006412">
    <property type="term" value="P:translation"/>
    <property type="evidence" value="ECO:0000305"/>
    <property type="project" value="UniProtKB"/>
</dbReference>
<dbReference type="FunFam" id="4.10.830.10:FF:000002">
    <property type="entry name" value="40S ribosomal protein S29"/>
    <property type="match status" value="1"/>
</dbReference>
<dbReference type="Gene3D" id="4.10.830.10">
    <property type="entry name" value="30s Ribosomal Protein S14, Chain N"/>
    <property type="match status" value="1"/>
</dbReference>
<dbReference type="InterPro" id="IPR001209">
    <property type="entry name" value="Ribosomal_uS14"/>
</dbReference>
<dbReference type="InterPro" id="IPR018271">
    <property type="entry name" value="Ribosomal_uS14_CS"/>
</dbReference>
<dbReference type="InterPro" id="IPR039744">
    <property type="entry name" value="RIbosomal_uS14_euk_arc"/>
</dbReference>
<dbReference type="InterPro" id="IPR043140">
    <property type="entry name" value="Ribosomal_uS14_sf"/>
</dbReference>
<dbReference type="NCBIfam" id="NF004424">
    <property type="entry name" value="PRK05766.1"/>
    <property type="match status" value="1"/>
</dbReference>
<dbReference type="PANTHER" id="PTHR12010">
    <property type="entry name" value="40S RIBOSOMAL PROTEIN S29"/>
    <property type="match status" value="1"/>
</dbReference>
<dbReference type="PANTHER" id="PTHR12010:SF26">
    <property type="entry name" value="SMALL RIBOSOMAL SUBUNIT PROTEIN US14"/>
    <property type="match status" value="1"/>
</dbReference>
<dbReference type="Pfam" id="PF00253">
    <property type="entry name" value="Ribosomal_S14"/>
    <property type="match status" value="1"/>
</dbReference>
<dbReference type="PROSITE" id="PS00527">
    <property type="entry name" value="RIBOSOMAL_S14"/>
    <property type="match status" value="1"/>
</dbReference>
<sequence>MGHQQLYWSHPRKFGQGSRSCRVCSNRHGLIRKYGLNMCRQCFRQYAKDIGFIKLD</sequence>
<keyword id="KW-0002">3D-structure</keyword>
<keyword id="KW-0007">Acetylation</keyword>
<keyword id="KW-0025">Alternative splicing</keyword>
<keyword id="KW-0963">Cytoplasm</keyword>
<keyword id="KW-1024">Diamond-Blackfan anemia</keyword>
<keyword id="KW-0903">Direct protein sequencing</keyword>
<keyword id="KW-0225">Disease variant</keyword>
<keyword id="KW-0256">Endoplasmic reticulum</keyword>
<keyword id="KW-0479">Metal-binding</keyword>
<keyword id="KW-0488">Methylation</keyword>
<keyword id="KW-0597">Phosphoprotein</keyword>
<keyword id="KW-1267">Proteomics identification</keyword>
<keyword id="KW-1185">Reference proteome</keyword>
<keyword id="KW-0687">Ribonucleoprotein</keyword>
<keyword id="KW-0689">Ribosomal protein</keyword>
<keyword id="KW-0862">Zinc</keyword>
<proteinExistence type="evidence at protein level"/>
<evidence type="ECO:0000250" key="1">
    <source>
        <dbReference type="UniProtKB" id="Q6QAP6"/>
    </source>
</evidence>
<evidence type="ECO:0000269" key="2">
    <source>
    </source>
</evidence>
<evidence type="ECO:0000269" key="3">
    <source>
    </source>
</evidence>
<evidence type="ECO:0000269" key="4">
    <source>
    </source>
</evidence>
<evidence type="ECO:0000269" key="5">
    <source>
    </source>
</evidence>
<evidence type="ECO:0000269" key="6">
    <source>
    </source>
</evidence>
<evidence type="ECO:0000269" key="7">
    <source ref="7"/>
</evidence>
<evidence type="ECO:0000303" key="8">
    <source>
    </source>
</evidence>
<evidence type="ECO:0000303" key="9">
    <source>
    </source>
</evidence>
<evidence type="ECO:0000305" key="10"/>
<evidence type="ECO:0000305" key="11">
    <source>
    </source>
</evidence>
<evidence type="ECO:0000305" key="12">
    <source>
    </source>
</evidence>
<evidence type="ECO:0007744" key="13">
    <source>
        <dbReference type="PDB" id="4UG0"/>
    </source>
</evidence>
<evidence type="ECO:0007744" key="14">
    <source>
        <dbReference type="PDB" id="5A2Q"/>
    </source>
</evidence>
<evidence type="ECO:0007744" key="15">
    <source>
        <dbReference type="PDB" id="5AJ0"/>
    </source>
</evidence>
<evidence type="ECO:0007744" key="16">
    <source>
        <dbReference type="PDB" id="5FLX"/>
    </source>
</evidence>
<evidence type="ECO:0007744" key="17">
    <source>
        <dbReference type="PDB" id="5LKS"/>
    </source>
</evidence>
<evidence type="ECO:0007744" key="18">
    <source>
    </source>
</evidence>
<evidence type="ECO:0007744" key="19">
    <source>
    </source>
</evidence>
<evidence type="ECO:0007744" key="20">
    <source>
    </source>
</evidence>
<evidence type="ECO:0007829" key="21">
    <source>
        <dbReference type="PDB" id="6ZOJ"/>
    </source>
</evidence>
<evidence type="ECO:0007829" key="22">
    <source>
        <dbReference type="PDB" id="7R4X"/>
    </source>
</evidence>
<comment type="function">
    <text evidence="2 4 5">Component of the small ribosomal subunit (PubMed:23636399, PubMed:25901680, PubMed:25957688). The ribosome is a large ribonucleoprotein complex responsible for the synthesis of proteins in the cell (PubMed:23636399, PubMed:25901680, PubMed:25957688).</text>
</comment>
<comment type="cofactor">
    <cofactor evidence="5">
        <name>Zn(2+)</name>
        <dbReference type="ChEBI" id="CHEBI:29105"/>
    </cofactor>
    <text evidence="5">Binds 1 zinc ion per subunit.</text>
</comment>
<comment type="subunit">
    <text evidence="2 4 5">Component of the 40S small ribosomal subunit.</text>
</comment>
<comment type="subcellular location">
    <subcellularLocation>
        <location evidence="5">Cytoplasm</location>
        <location evidence="5">Cytosol</location>
    </subcellularLocation>
    <subcellularLocation>
        <location evidence="11 12">Cytoplasm</location>
    </subcellularLocation>
    <subcellularLocation>
        <location evidence="1">Rough endoplasmic reticulum</location>
    </subcellularLocation>
    <text evidence="1 5">Detected on cytosolic polysomes (PubMed:25957688). Detected in ribosomes that are associated with the rough endoplasmic reticulum (By similarity).</text>
</comment>
<comment type="alternative products">
    <event type="alternative splicing"/>
    <isoform>
        <id>P62273-1</id>
        <name>1</name>
        <sequence type="displayed"/>
    </isoform>
    <isoform>
        <id>P62273-2</id>
        <name>2</name>
        <sequence type="described" ref="VSP_042844"/>
    </isoform>
</comment>
<comment type="disease" evidence="3">
    <disease id="DI-04161">
        <name>Diamond-Blackfan anemia 13</name>
        <acronym>DBA13</acronym>
        <description>A form of Diamond-Blackfan anemia, a congenital non-regenerative hypoplastic anemia that usually presents early in infancy. Diamond-Blackfan anemia is characterized by a moderate to severe macrocytic anemia, erythroblastopenia, and an increased risk of malignancy. 30 to 40% of Diamond-Blackfan anemia patients present with short stature and congenital anomalies, the most frequent being craniofacial (Pierre-Robin syndrome and cleft palate), thumb and urogenital anomalies.</description>
        <dbReference type="MIM" id="615909"/>
    </disease>
    <text>The disease is caused by variants affecting the gene represented in this entry.</text>
</comment>
<comment type="similarity">
    <text evidence="10">Belongs to the universal ribosomal protein uS14 family.</text>
</comment>